<organism>
    <name type="scientific">Arabidopsis thaliana</name>
    <name type="common">Mouse-ear cress</name>
    <dbReference type="NCBI Taxonomy" id="3702"/>
    <lineage>
        <taxon>Eukaryota</taxon>
        <taxon>Viridiplantae</taxon>
        <taxon>Streptophyta</taxon>
        <taxon>Embryophyta</taxon>
        <taxon>Tracheophyta</taxon>
        <taxon>Spermatophyta</taxon>
        <taxon>Magnoliopsida</taxon>
        <taxon>eudicotyledons</taxon>
        <taxon>Gunneridae</taxon>
        <taxon>Pentapetalae</taxon>
        <taxon>rosids</taxon>
        <taxon>malvids</taxon>
        <taxon>Brassicales</taxon>
        <taxon>Brassicaceae</taxon>
        <taxon>Camelineae</taxon>
        <taxon>Arabidopsis</taxon>
    </lineage>
</organism>
<comment type="function">
    <text evidence="1 5">Aldehyde reductase that catalyzes the reduction of the aldehyde carbonyl groups on saturated and alpha,beta-unsaturated aldehydes with more than 5 carbons (PubMed:21169366). No activity on alpha,beta-unsaturated ketones (PubMed:21169366). Can use propionaldehyde, butyraldehyde, methylglyoxal, (e)-2-pentenal, (E)-2-hexenal, (Z)-3-hexenal and (E)-2-nonenal as substrates, but not propenal (acrolein), crotonaldehyde, 2-butanone, 3-buten-2-one or 1-penten-3-one (PubMed:21169366). May act as a short alcohol-polyol-sugar dehydrogenase possibly related to carbohydrate metabolism and the acquisition of desiccation tolerance (By similarity). May also be involved in signal transduction (By similarity).</text>
</comment>
<comment type="biophysicochemical properties">
    <kinetics>
        <KM evidence="5">10 mM for butyraldehyde</KM>
        <KM evidence="5">0.09 mM for (E)-2-pentenal</KM>
        <KM evidence="5">4.4 mM for (E)-2-hexenal</KM>
        <KM evidence="5">70 mM for (E)-2-nonenal</KM>
        <KM evidence="5">4.7 mM for methylglyoxal</KM>
        <text evidence="5">kcat is 4.3 sec(-1) for butyraldehyde. kcat is 1.7 sec(-1) for (E)-2-pentenal. kcat is 1.1 sec(-1) for (E)-2-hexenal. kcat is 7.3 sec(-1) for (E)-2-nonenal. kcat is 2.4 sec(-1) for methylglyoxal.</text>
    </kinetics>
</comment>
<comment type="subcellular location">
    <subcellularLocation>
        <location evidence="5">Plastid</location>
        <location evidence="5">Chloroplast</location>
    </subcellularLocation>
</comment>
<comment type="alternative products">
    <event type="alternative initiation"/>
    <isoform>
        <id>Q9FZ42-1</id>
        <name>1</name>
        <sequence type="displayed"/>
    </isoform>
    <isoform>
        <id>Q9FZ42-2</id>
        <name>2</name>
        <sequence type="described" ref="VSP_041301"/>
    </isoform>
</comment>
<comment type="similarity">
    <text evidence="7">Belongs to the short-chain dehydrogenases/reductases (SDR) family.</text>
</comment>
<feature type="transit peptide" description="Chloroplast" evidence="8">
    <location>
        <begin position="1"/>
        <end status="unknown"/>
    </location>
</feature>
<feature type="chain" id="PRO_0000239257" description="NADPH-dependent aldehyde reductase 1, chloroplastic">
    <location>
        <begin status="unknown"/>
        <end position="288"/>
    </location>
</feature>
<feature type="region of interest" description="Disordered" evidence="4">
    <location>
        <begin position="1"/>
        <end position="32"/>
    </location>
</feature>
<feature type="compositionally biased region" description="Basic and acidic residues" evidence="4">
    <location>
        <begin position="1"/>
        <end position="18"/>
    </location>
</feature>
<feature type="compositionally biased region" description="Polar residues" evidence="4">
    <location>
        <begin position="20"/>
        <end position="32"/>
    </location>
</feature>
<feature type="active site" description="Proton acceptor" evidence="3">
    <location>
        <position position="192"/>
    </location>
</feature>
<feature type="binding site" evidence="2">
    <location>
        <begin position="47"/>
        <end position="71"/>
    </location>
    <ligand>
        <name>NADP(+)</name>
        <dbReference type="ChEBI" id="CHEBI:58349"/>
    </ligand>
</feature>
<feature type="binding site" evidence="2">
    <location>
        <position position="179"/>
    </location>
    <ligand>
        <name>substrate</name>
    </ligand>
</feature>
<feature type="splice variant" id="VSP_041301" description="In isoform 2." evidence="7">
    <original>M</original>
    <variation>MNVLCRVFTSSRVLSSNVTFSFSQIPNNTKKPLLEKRRLSPRVCLRAM</variation>
    <location>
        <position position="1"/>
    </location>
</feature>
<feature type="sequence conflict" description="In Ref. 1; AAG51119." evidence="7" ref="1">
    <location>
        <begin position="37"/>
        <end position="38"/>
    </location>
</feature>
<feature type="sequence conflict" description="In Ref. 4; CAA81564." evidence="7" ref="4">
    <original>T</original>
    <variation>A</variation>
    <location>
        <position position="193"/>
    </location>
</feature>
<reference key="1">
    <citation type="journal article" date="2000" name="Nature">
        <title>Sequence and analysis of chromosome 1 of the plant Arabidopsis thaliana.</title>
        <authorList>
            <person name="Theologis A."/>
            <person name="Ecker J.R."/>
            <person name="Palm C.J."/>
            <person name="Federspiel N.A."/>
            <person name="Kaul S."/>
            <person name="White O."/>
            <person name="Alonso J."/>
            <person name="Altafi H."/>
            <person name="Araujo R."/>
            <person name="Bowman C.L."/>
            <person name="Brooks S.Y."/>
            <person name="Buehler E."/>
            <person name="Chan A."/>
            <person name="Chao Q."/>
            <person name="Chen H."/>
            <person name="Cheuk R.F."/>
            <person name="Chin C.W."/>
            <person name="Chung M.K."/>
            <person name="Conn L."/>
            <person name="Conway A.B."/>
            <person name="Conway A.R."/>
            <person name="Creasy T.H."/>
            <person name="Dewar K."/>
            <person name="Dunn P."/>
            <person name="Etgu P."/>
            <person name="Feldblyum T.V."/>
            <person name="Feng J.-D."/>
            <person name="Fong B."/>
            <person name="Fujii C.Y."/>
            <person name="Gill J.E."/>
            <person name="Goldsmith A.D."/>
            <person name="Haas B."/>
            <person name="Hansen N.F."/>
            <person name="Hughes B."/>
            <person name="Huizar L."/>
            <person name="Hunter J.L."/>
            <person name="Jenkins J."/>
            <person name="Johnson-Hopson C."/>
            <person name="Khan S."/>
            <person name="Khaykin E."/>
            <person name="Kim C.J."/>
            <person name="Koo H.L."/>
            <person name="Kremenetskaia I."/>
            <person name="Kurtz D.B."/>
            <person name="Kwan A."/>
            <person name="Lam B."/>
            <person name="Langin-Hooper S."/>
            <person name="Lee A."/>
            <person name="Lee J.M."/>
            <person name="Lenz C.A."/>
            <person name="Li J.H."/>
            <person name="Li Y.-P."/>
            <person name="Lin X."/>
            <person name="Liu S.X."/>
            <person name="Liu Z.A."/>
            <person name="Luros J.S."/>
            <person name="Maiti R."/>
            <person name="Marziali A."/>
            <person name="Militscher J."/>
            <person name="Miranda M."/>
            <person name="Nguyen M."/>
            <person name="Nierman W.C."/>
            <person name="Osborne B.I."/>
            <person name="Pai G."/>
            <person name="Peterson J."/>
            <person name="Pham P.K."/>
            <person name="Rizzo M."/>
            <person name="Rooney T."/>
            <person name="Rowley D."/>
            <person name="Sakano H."/>
            <person name="Salzberg S.L."/>
            <person name="Schwartz J.R."/>
            <person name="Shinn P."/>
            <person name="Southwick A.M."/>
            <person name="Sun H."/>
            <person name="Tallon L.J."/>
            <person name="Tambunga G."/>
            <person name="Toriumi M.J."/>
            <person name="Town C.D."/>
            <person name="Utterback T."/>
            <person name="Van Aken S."/>
            <person name="Vaysberg M."/>
            <person name="Vysotskaia V.S."/>
            <person name="Walker M."/>
            <person name="Wu D."/>
            <person name="Yu G."/>
            <person name="Fraser C.M."/>
            <person name="Venter J.C."/>
            <person name="Davis R.W."/>
        </authorList>
    </citation>
    <scope>NUCLEOTIDE SEQUENCE [LARGE SCALE GENOMIC DNA]</scope>
    <source>
        <strain>cv. Columbia</strain>
    </source>
</reference>
<reference key="2">
    <citation type="journal article" date="2017" name="Plant J.">
        <title>Araport11: a complete reannotation of the Arabidopsis thaliana reference genome.</title>
        <authorList>
            <person name="Cheng C.Y."/>
            <person name="Krishnakumar V."/>
            <person name="Chan A.P."/>
            <person name="Thibaud-Nissen F."/>
            <person name="Schobel S."/>
            <person name="Town C.D."/>
        </authorList>
    </citation>
    <scope>GENOME REANNOTATION</scope>
    <source>
        <strain>cv. Columbia</strain>
    </source>
</reference>
<reference key="3">
    <citation type="journal article" date="2003" name="Science">
        <title>Empirical analysis of transcriptional activity in the Arabidopsis genome.</title>
        <authorList>
            <person name="Yamada K."/>
            <person name="Lim J."/>
            <person name="Dale J.M."/>
            <person name="Chen H."/>
            <person name="Shinn P."/>
            <person name="Palm C.J."/>
            <person name="Southwick A.M."/>
            <person name="Wu H.C."/>
            <person name="Kim C.J."/>
            <person name="Nguyen M."/>
            <person name="Pham P.K."/>
            <person name="Cheuk R.F."/>
            <person name="Karlin-Newmann G."/>
            <person name="Liu S.X."/>
            <person name="Lam B."/>
            <person name="Sakano H."/>
            <person name="Wu T."/>
            <person name="Yu G."/>
            <person name="Miranda M."/>
            <person name="Quach H.L."/>
            <person name="Tripp M."/>
            <person name="Chang C.H."/>
            <person name="Lee J.M."/>
            <person name="Toriumi M.J."/>
            <person name="Chan M.M."/>
            <person name="Tang C.C."/>
            <person name="Onodera C.S."/>
            <person name="Deng J.M."/>
            <person name="Akiyama K."/>
            <person name="Ansari Y."/>
            <person name="Arakawa T."/>
            <person name="Banh J."/>
            <person name="Banno F."/>
            <person name="Bowser L."/>
            <person name="Brooks S.Y."/>
            <person name="Carninci P."/>
            <person name="Chao Q."/>
            <person name="Choy N."/>
            <person name="Enju A."/>
            <person name="Goldsmith A.D."/>
            <person name="Gurjal M."/>
            <person name="Hansen N.F."/>
            <person name="Hayashizaki Y."/>
            <person name="Johnson-Hopson C."/>
            <person name="Hsuan V.W."/>
            <person name="Iida K."/>
            <person name="Karnes M."/>
            <person name="Khan S."/>
            <person name="Koesema E."/>
            <person name="Ishida J."/>
            <person name="Jiang P.X."/>
            <person name="Jones T."/>
            <person name="Kawai J."/>
            <person name="Kamiya A."/>
            <person name="Meyers C."/>
            <person name="Nakajima M."/>
            <person name="Narusaka M."/>
            <person name="Seki M."/>
            <person name="Sakurai T."/>
            <person name="Satou M."/>
            <person name="Tamse R."/>
            <person name="Vaysberg M."/>
            <person name="Wallender E.K."/>
            <person name="Wong C."/>
            <person name="Yamamura Y."/>
            <person name="Yuan S."/>
            <person name="Shinozaki K."/>
            <person name="Davis R.W."/>
            <person name="Theologis A."/>
            <person name="Ecker J.R."/>
        </authorList>
    </citation>
    <scope>NUCLEOTIDE SEQUENCE [LARGE SCALE MRNA] (ISOFORM 1)</scope>
    <source>
        <strain>cv. Columbia</strain>
    </source>
</reference>
<reference key="4">
    <citation type="journal article" date="1996" name="Plant J.">
        <title>Further progress towards a catalogue of all Arabidopsis genes: analysis of a set of 5000 non-redundant ESTs.</title>
        <authorList>
            <person name="Cooke R."/>
            <person name="Raynal M."/>
            <person name="Laudie M."/>
            <person name="Grellet F."/>
            <person name="Delseny M."/>
            <person name="Morris P.-C."/>
            <person name="Guerrier D."/>
            <person name="Giraudat J."/>
            <person name="Quigley F."/>
            <person name="Clabault G."/>
            <person name="Li Y.-F."/>
            <person name="Mache R."/>
            <person name="Krivitzky M."/>
            <person name="Gy I.J.-J."/>
            <person name="Kreis M."/>
            <person name="Lecharny A."/>
            <person name="Parmentier Y."/>
            <person name="Marbach J."/>
            <person name="Fleck J."/>
            <person name="Clement B."/>
            <person name="Philipps G."/>
            <person name="Herve C."/>
            <person name="Bardet C."/>
            <person name="Tremousaygue D."/>
            <person name="Lescure B."/>
            <person name="Lacomme C."/>
            <person name="Roby D."/>
            <person name="Jourjon M.-F."/>
            <person name="Chabrier P."/>
            <person name="Charpenteau J.-L."/>
            <person name="Desprez T."/>
            <person name="Amselem J."/>
            <person name="Chiapello H."/>
            <person name="Hoefte H."/>
        </authorList>
    </citation>
    <scope>NUCLEOTIDE SEQUENCE [LARGE SCALE MRNA] OF 170-288 (ISOFORMS 1/2)</scope>
    <source>
        <strain>cv. Columbia</strain>
        <tissue>Dry seed</tissue>
    </source>
</reference>
<reference key="5">
    <citation type="journal article" date="2011" name="J. Biol. Chem.">
        <title>NADPH-dependent reductases involved in the detoxification of reactive carbonyls in plants.</title>
        <authorList>
            <person name="Yamauchi Y."/>
            <person name="Hasegawa A."/>
            <person name="Taninaka A."/>
            <person name="Mizutani M."/>
            <person name="Sugimoto Y."/>
        </authorList>
    </citation>
    <scope>FUNCTION</scope>
    <scope>SUBSTRATE SPECIFICITY</scope>
    <scope>SUBCELLULAR LOCATION</scope>
    <scope>BIOPHYSICOCHEMICAL PROPERTIES</scope>
</reference>
<accession>Q9FZ42</accession>
<accession>Q42157</accession>
<accession>Q42225</accession>
<accession>Q9C7L3</accession>
<dbReference type="EC" id="1.1.1.-" evidence="5"/>
<dbReference type="EMBL" id="AC064840">
    <property type="protein sequence ID" value="AAG00870.1"/>
    <property type="molecule type" value="Genomic_DNA"/>
</dbReference>
<dbReference type="EMBL" id="AC069144">
    <property type="protein sequence ID" value="AAG51119.1"/>
    <property type="molecule type" value="Genomic_DNA"/>
</dbReference>
<dbReference type="EMBL" id="CP002684">
    <property type="protein sequence ID" value="AEE33158.1"/>
    <property type="molecule type" value="Genomic_DNA"/>
</dbReference>
<dbReference type="EMBL" id="AF372931">
    <property type="protein sequence ID" value="AAK50071.1"/>
    <property type="molecule type" value="mRNA"/>
</dbReference>
<dbReference type="EMBL" id="AY124852">
    <property type="protein sequence ID" value="AAM70561.1"/>
    <property type="molecule type" value="mRNA"/>
</dbReference>
<dbReference type="EMBL" id="Z27012">
    <property type="protein sequence ID" value="CAA81564.1"/>
    <property type="molecule type" value="mRNA"/>
</dbReference>
<dbReference type="PIR" id="C96590">
    <property type="entry name" value="C96590"/>
</dbReference>
<dbReference type="RefSeq" id="NP_564670.2">
    <molecule id="Q9FZ42-2"/>
    <property type="nucleotide sequence ID" value="NM_104360.3"/>
</dbReference>
<dbReference type="SMR" id="Q9FZ42"/>
<dbReference type="BioGRID" id="27151">
    <property type="interactions" value="1"/>
</dbReference>
<dbReference type="FunCoup" id="Q9FZ42">
    <property type="interactions" value="9"/>
</dbReference>
<dbReference type="STRING" id="3702.Q9FZ42"/>
<dbReference type="PaxDb" id="3702-AT1G54870.1"/>
<dbReference type="PeptideAtlas" id="Q9FZ42"/>
<dbReference type="EnsemblPlants" id="AT1G54870.1">
    <molecule id="Q9FZ42-2"/>
    <property type="protein sequence ID" value="AT1G54870.1"/>
    <property type="gene ID" value="AT1G54870"/>
</dbReference>
<dbReference type="GeneID" id="841926"/>
<dbReference type="Gramene" id="AT1G54870.1">
    <molecule id="Q9FZ42-2"/>
    <property type="protein sequence ID" value="AT1G54870.1"/>
    <property type="gene ID" value="AT1G54870"/>
</dbReference>
<dbReference type="KEGG" id="ath:AT1G54870"/>
<dbReference type="Araport" id="AT1G54870"/>
<dbReference type="TAIR" id="AT1G54870"/>
<dbReference type="eggNOG" id="KOG0725">
    <property type="taxonomic scope" value="Eukaryota"/>
</dbReference>
<dbReference type="HOGENOM" id="CLU_010194_4_1_1"/>
<dbReference type="InParanoid" id="Q9FZ42"/>
<dbReference type="OMA" id="AAYQMSQ"/>
<dbReference type="OrthoDB" id="47007at2759"/>
<dbReference type="PhylomeDB" id="Q9FZ42"/>
<dbReference type="BioCyc" id="ARA:AT1G54870-MONOMER"/>
<dbReference type="BioCyc" id="MetaCyc:AT1G54870-MONOMER"/>
<dbReference type="SABIO-RK" id="Q9FZ42"/>
<dbReference type="PRO" id="PR:Q9FZ42"/>
<dbReference type="Proteomes" id="UP000006548">
    <property type="component" value="Chromosome 1"/>
</dbReference>
<dbReference type="ExpressionAtlas" id="Q9FZ42">
    <property type="expression patterns" value="baseline and differential"/>
</dbReference>
<dbReference type="GO" id="GO:0009507">
    <property type="term" value="C:chloroplast"/>
    <property type="evidence" value="ECO:0000314"/>
    <property type="project" value="TAIR"/>
</dbReference>
<dbReference type="GO" id="GO:0008106">
    <property type="term" value="F:alcohol dehydrogenase (NADP+) activity"/>
    <property type="evidence" value="ECO:0000314"/>
    <property type="project" value="TAIR"/>
</dbReference>
<dbReference type="CDD" id="cd05355">
    <property type="entry name" value="SDR_c1"/>
    <property type="match status" value="1"/>
</dbReference>
<dbReference type="FunFam" id="3.40.50.720:FF:000757">
    <property type="entry name" value="NADPH-dependent aldehyde reductase 1, chloroplastic"/>
    <property type="match status" value="1"/>
</dbReference>
<dbReference type="Gene3D" id="3.40.50.720">
    <property type="entry name" value="NAD(P)-binding Rossmann-like Domain"/>
    <property type="match status" value="1"/>
</dbReference>
<dbReference type="InterPro" id="IPR036291">
    <property type="entry name" value="NAD(P)-bd_dom_sf"/>
</dbReference>
<dbReference type="InterPro" id="IPR020904">
    <property type="entry name" value="Sc_DH/Rdtase_CS"/>
</dbReference>
<dbReference type="InterPro" id="IPR002347">
    <property type="entry name" value="SDR_fam"/>
</dbReference>
<dbReference type="PANTHER" id="PTHR48107:SF16">
    <property type="entry name" value="NADPH-DEPENDENT ALDEHYDE REDUCTASE 1, CHLOROPLASTIC"/>
    <property type="match status" value="1"/>
</dbReference>
<dbReference type="PANTHER" id="PTHR48107">
    <property type="entry name" value="NADPH-DEPENDENT ALDEHYDE REDUCTASE-LIKE PROTEIN, CHLOROPLASTIC-RELATED"/>
    <property type="match status" value="1"/>
</dbReference>
<dbReference type="Pfam" id="PF13561">
    <property type="entry name" value="adh_short_C2"/>
    <property type="match status" value="1"/>
</dbReference>
<dbReference type="PRINTS" id="PR00081">
    <property type="entry name" value="GDHRDH"/>
</dbReference>
<dbReference type="PRINTS" id="PR00080">
    <property type="entry name" value="SDRFAMILY"/>
</dbReference>
<dbReference type="SUPFAM" id="SSF51735">
    <property type="entry name" value="NAD(P)-binding Rossmann-fold domains"/>
    <property type="match status" value="1"/>
</dbReference>
<dbReference type="PROSITE" id="PS00061">
    <property type="entry name" value="ADH_SHORT"/>
    <property type="match status" value="1"/>
</dbReference>
<protein>
    <recommendedName>
        <fullName evidence="6">NADPH-dependent aldehyde reductase 1, chloroplastic</fullName>
        <shortName evidence="6">AtChlADR1</shortName>
        <ecNumber evidence="5">1.1.1.-</ecNumber>
    </recommendedName>
    <alternativeName>
        <fullName>Glucose and ribitol dehydrogenase homolog 1</fullName>
    </alternativeName>
</protein>
<evidence type="ECO:0000250" key="1"/>
<evidence type="ECO:0000250" key="2">
    <source>
        <dbReference type="UniProtKB" id="Q12634"/>
    </source>
</evidence>
<evidence type="ECO:0000255" key="3">
    <source>
        <dbReference type="PROSITE-ProRule" id="PRU10001"/>
    </source>
</evidence>
<evidence type="ECO:0000256" key="4">
    <source>
        <dbReference type="SAM" id="MobiDB-lite"/>
    </source>
</evidence>
<evidence type="ECO:0000269" key="5">
    <source>
    </source>
</evidence>
<evidence type="ECO:0000303" key="6">
    <source>
    </source>
</evidence>
<evidence type="ECO:0000305" key="7"/>
<evidence type="ECO:0000305" key="8">
    <source>
    </source>
</evidence>
<gene>
    <name evidence="6" type="primary">ChlADR1</name>
    <name type="ordered locus">At1g54870</name>
    <name type="ORF">F14C21_16</name>
    <name type="ORF">T24C10.1</name>
</gene>
<keyword id="KW-0024">Alternative initiation</keyword>
<keyword id="KW-0150">Chloroplast</keyword>
<keyword id="KW-0521">NADP</keyword>
<keyword id="KW-0560">Oxidoreductase</keyword>
<keyword id="KW-0934">Plastid</keyword>
<keyword id="KW-1185">Reference proteome</keyword>
<keyword id="KW-0809">Transit peptide</keyword>
<proteinExistence type="evidence at protein level"/>
<name>ADRC1_ARATH</name>
<sequence length="288" mass="31387">MASEKQKQHAQPGKEHVMESSPQFSSSDYQPSNKLRGKVALITGGDSGIGRAVGYCFASEGATVAFTYVKGQEEKDAQETLQMLKEVKTSDSKEPIAIPTDLGFDENCKRVVDEVVNAFGRIDVLINNAAEQYESSTIEEIDEPRLERVFRTNIFSYFFLTRHALKHMKEGSSIINTTSVNAYKGNASLLDYTATKGAIVAFTRGLALQLAEKGIRVNGVAPGPIWTPLIPASFNEEKIKNFGSEVPMKRAGQPIEVAPSYVFLACNHCSSYFTGQVLHPNGGAVVNA</sequence>